<protein>
    <recommendedName>
        <fullName evidence="1">3-dehydroquinate dehydratase</fullName>
        <shortName evidence="1">3-dehydroquinase</shortName>
        <ecNumber evidence="1">4.2.1.10</ecNumber>
    </recommendedName>
    <alternativeName>
        <fullName evidence="1">Type II DHQase</fullName>
    </alternativeName>
</protein>
<sequence>MKKILLLNGPNLNMLGKREPHIYGSQTLSDIEQHLQQSAQAQGYELDYFQANGEESLINRIHQAFQNTDFIIINPGAFTHTSVAIRDALLAVSIPFIEVHLSNVHAREPFRHHSYLSDVAKGVICGLGAKGYDYALDFAISELQKIQLGEMMNG</sequence>
<gene>
    <name evidence="1" type="primary">aroQ</name>
    <name type="ordered locus">APL_1862</name>
</gene>
<comment type="function">
    <text evidence="1">Catalyzes a trans-dehydration via an enolate intermediate.</text>
</comment>
<comment type="catalytic activity">
    <reaction evidence="1">
        <text>3-dehydroquinate = 3-dehydroshikimate + H2O</text>
        <dbReference type="Rhea" id="RHEA:21096"/>
        <dbReference type="ChEBI" id="CHEBI:15377"/>
        <dbReference type="ChEBI" id="CHEBI:16630"/>
        <dbReference type="ChEBI" id="CHEBI:32364"/>
        <dbReference type="EC" id="4.2.1.10"/>
    </reaction>
</comment>
<comment type="pathway">
    <text evidence="1">Metabolic intermediate biosynthesis; chorismate biosynthesis; chorismate from D-erythrose 4-phosphate and phosphoenolpyruvate: step 3/7.</text>
</comment>
<comment type="subunit">
    <text evidence="1">Homododecamer.</text>
</comment>
<comment type="similarity">
    <text evidence="1">Belongs to the type-II 3-dehydroquinase family.</text>
</comment>
<reference key="1">
    <citation type="journal article" date="2008" name="J. Bacteriol.">
        <title>The complete genome sequence of Actinobacillus pleuropneumoniae L20 (serotype 5b).</title>
        <authorList>
            <person name="Foote S.J."/>
            <person name="Bosse J.T."/>
            <person name="Bouevitch A.B."/>
            <person name="Langford P.R."/>
            <person name="Young N.M."/>
            <person name="Nash J.H.E."/>
        </authorList>
    </citation>
    <scope>NUCLEOTIDE SEQUENCE [LARGE SCALE GENOMIC DNA]</scope>
    <source>
        <strain>L20</strain>
    </source>
</reference>
<keyword id="KW-0028">Amino-acid biosynthesis</keyword>
<keyword id="KW-0057">Aromatic amino acid biosynthesis</keyword>
<keyword id="KW-0456">Lyase</keyword>
<keyword id="KW-1185">Reference proteome</keyword>
<evidence type="ECO:0000255" key="1">
    <source>
        <dbReference type="HAMAP-Rule" id="MF_00169"/>
    </source>
</evidence>
<dbReference type="EC" id="4.2.1.10" evidence="1"/>
<dbReference type="EMBL" id="CP000569">
    <property type="protein sequence ID" value="ABN74944.1"/>
    <property type="molecule type" value="Genomic_DNA"/>
</dbReference>
<dbReference type="RefSeq" id="WP_005599518.1">
    <property type="nucleotide sequence ID" value="NC_009053.1"/>
</dbReference>
<dbReference type="SMR" id="A3N3F8"/>
<dbReference type="STRING" id="416269.APL_1862"/>
<dbReference type="EnsemblBacteria" id="ABN74944">
    <property type="protein sequence ID" value="ABN74944"/>
    <property type="gene ID" value="APL_1862"/>
</dbReference>
<dbReference type="GeneID" id="48600167"/>
<dbReference type="KEGG" id="apl:APL_1862"/>
<dbReference type="eggNOG" id="COG0757">
    <property type="taxonomic scope" value="Bacteria"/>
</dbReference>
<dbReference type="HOGENOM" id="CLU_090968_1_0_6"/>
<dbReference type="UniPathway" id="UPA00053">
    <property type="reaction ID" value="UER00086"/>
</dbReference>
<dbReference type="Proteomes" id="UP000001432">
    <property type="component" value="Chromosome"/>
</dbReference>
<dbReference type="GO" id="GO:0003855">
    <property type="term" value="F:3-dehydroquinate dehydratase activity"/>
    <property type="evidence" value="ECO:0007669"/>
    <property type="project" value="UniProtKB-UniRule"/>
</dbReference>
<dbReference type="GO" id="GO:0008652">
    <property type="term" value="P:amino acid biosynthetic process"/>
    <property type="evidence" value="ECO:0007669"/>
    <property type="project" value="UniProtKB-KW"/>
</dbReference>
<dbReference type="GO" id="GO:0009073">
    <property type="term" value="P:aromatic amino acid family biosynthetic process"/>
    <property type="evidence" value="ECO:0007669"/>
    <property type="project" value="UniProtKB-KW"/>
</dbReference>
<dbReference type="GO" id="GO:0009423">
    <property type="term" value="P:chorismate biosynthetic process"/>
    <property type="evidence" value="ECO:0007669"/>
    <property type="project" value="UniProtKB-UniRule"/>
</dbReference>
<dbReference type="GO" id="GO:0019631">
    <property type="term" value="P:quinate catabolic process"/>
    <property type="evidence" value="ECO:0007669"/>
    <property type="project" value="TreeGrafter"/>
</dbReference>
<dbReference type="CDD" id="cd00466">
    <property type="entry name" value="DHQase_II"/>
    <property type="match status" value="1"/>
</dbReference>
<dbReference type="Gene3D" id="3.40.50.9100">
    <property type="entry name" value="Dehydroquinase, class II"/>
    <property type="match status" value="1"/>
</dbReference>
<dbReference type="HAMAP" id="MF_00169">
    <property type="entry name" value="AroQ"/>
    <property type="match status" value="1"/>
</dbReference>
<dbReference type="InterPro" id="IPR001874">
    <property type="entry name" value="DHquinase_II"/>
</dbReference>
<dbReference type="InterPro" id="IPR018509">
    <property type="entry name" value="DHquinase_II_CS"/>
</dbReference>
<dbReference type="InterPro" id="IPR036441">
    <property type="entry name" value="DHquinase_II_sf"/>
</dbReference>
<dbReference type="NCBIfam" id="TIGR01088">
    <property type="entry name" value="aroQ"/>
    <property type="match status" value="1"/>
</dbReference>
<dbReference type="NCBIfam" id="NF003804">
    <property type="entry name" value="PRK05395.1-1"/>
    <property type="match status" value="1"/>
</dbReference>
<dbReference type="NCBIfam" id="NF003805">
    <property type="entry name" value="PRK05395.1-2"/>
    <property type="match status" value="1"/>
</dbReference>
<dbReference type="NCBIfam" id="NF003806">
    <property type="entry name" value="PRK05395.1-3"/>
    <property type="match status" value="1"/>
</dbReference>
<dbReference type="NCBIfam" id="NF003807">
    <property type="entry name" value="PRK05395.1-4"/>
    <property type="match status" value="1"/>
</dbReference>
<dbReference type="PANTHER" id="PTHR21272">
    <property type="entry name" value="CATABOLIC 3-DEHYDROQUINASE"/>
    <property type="match status" value="1"/>
</dbReference>
<dbReference type="PANTHER" id="PTHR21272:SF3">
    <property type="entry name" value="CATABOLIC 3-DEHYDROQUINASE"/>
    <property type="match status" value="1"/>
</dbReference>
<dbReference type="Pfam" id="PF01220">
    <property type="entry name" value="DHquinase_II"/>
    <property type="match status" value="1"/>
</dbReference>
<dbReference type="PIRSF" id="PIRSF001399">
    <property type="entry name" value="DHquinase_II"/>
    <property type="match status" value="1"/>
</dbReference>
<dbReference type="SUPFAM" id="SSF52304">
    <property type="entry name" value="Type II 3-dehydroquinate dehydratase"/>
    <property type="match status" value="1"/>
</dbReference>
<dbReference type="PROSITE" id="PS01029">
    <property type="entry name" value="DEHYDROQUINASE_II"/>
    <property type="match status" value="1"/>
</dbReference>
<organism>
    <name type="scientific">Actinobacillus pleuropneumoniae serotype 5b (strain L20)</name>
    <dbReference type="NCBI Taxonomy" id="416269"/>
    <lineage>
        <taxon>Bacteria</taxon>
        <taxon>Pseudomonadati</taxon>
        <taxon>Pseudomonadota</taxon>
        <taxon>Gammaproteobacteria</taxon>
        <taxon>Pasteurellales</taxon>
        <taxon>Pasteurellaceae</taxon>
        <taxon>Actinobacillus</taxon>
    </lineage>
</organism>
<feature type="chain" id="PRO_1000023446" description="3-dehydroquinate dehydratase">
    <location>
        <begin position="1"/>
        <end position="154"/>
    </location>
</feature>
<feature type="active site" description="Proton acceptor" evidence="1">
    <location>
        <position position="23"/>
    </location>
</feature>
<feature type="active site" description="Proton donor" evidence="1">
    <location>
        <position position="100"/>
    </location>
</feature>
<feature type="binding site" evidence="1">
    <location>
        <position position="74"/>
    </location>
    <ligand>
        <name>substrate</name>
    </ligand>
</feature>
<feature type="binding site" evidence="1">
    <location>
        <position position="80"/>
    </location>
    <ligand>
        <name>substrate</name>
    </ligand>
</feature>
<feature type="binding site" evidence="1">
    <location>
        <position position="87"/>
    </location>
    <ligand>
        <name>substrate</name>
    </ligand>
</feature>
<feature type="binding site" evidence="1">
    <location>
        <begin position="101"/>
        <end position="102"/>
    </location>
    <ligand>
        <name>substrate</name>
    </ligand>
</feature>
<feature type="binding site" evidence="1">
    <location>
        <position position="111"/>
    </location>
    <ligand>
        <name>substrate</name>
    </ligand>
</feature>
<feature type="site" description="Transition state stabilizer" evidence="1">
    <location>
        <position position="18"/>
    </location>
</feature>
<name>AROQ_ACTP2</name>
<proteinExistence type="inferred from homology"/>
<accession>A3N3F8</accession>